<proteinExistence type="inferred from homology"/>
<reference key="1">
    <citation type="journal article" date="2010" name="BMC Genomics">
        <title>A genomic perspective on the potential of Actinobacillus succinogenes for industrial succinate production.</title>
        <authorList>
            <person name="McKinlay J.B."/>
            <person name="Laivenieks M."/>
            <person name="Schindler B.D."/>
            <person name="McKinlay A.A."/>
            <person name="Siddaramappa S."/>
            <person name="Challacombe J.F."/>
            <person name="Lowry S.R."/>
            <person name="Clum A."/>
            <person name="Lapidus A.L."/>
            <person name="Burkhart K.B."/>
            <person name="Harkins V."/>
            <person name="Vieille C."/>
        </authorList>
    </citation>
    <scope>NUCLEOTIDE SEQUENCE [LARGE SCALE GENOMIC DNA]</scope>
    <source>
        <strain>ATCC 55618 / DSM 22257 / CCUG 43843 / 130Z</strain>
    </source>
</reference>
<keyword id="KW-0521">NADP</keyword>
<keyword id="KW-0560">Oxidoreductase</keyword>
<keyword id="KW-0627">Porphyrin biosynthesis</keyword>
<keyword id="KW-1185">Reference proteome</keyword>
<evidence type="ECO:0000255" key="1">
    <source>
        <dbReference type="HAMAP-Rule" id="MF_00087"/>
    </source>
</evidence>
<gene>
    <name evidence="1" type="primary">hemA</name>
    <name type="ordered locus">Asuc_1116</name>
</gene>
<sequence>MTILVLGINHKTATVALREKVAFSEEKRLSALNQIEQLKLAQSTVILSTCNRTEVYLHNKFIQPEQNSAWIDECVAWFAAIHQIQLTDLQDCLYFYQNQQAVTHLMRVACGLDSLILGEPQILGQVKQAYQLAEEYYQRAHGLGKSAVISSELSRLFQKTFSTAKRVRTETNIGESAVSVAYAACSLGRQIFESLQELTILLVGAGETIELAARHLLRHGVKKLMIANRTRARAEALVAKLESPFIEILSLSELQDGLNQADIVISSTGSPTTLISYEMMKQAQIQRRYRPVLIVDIAVPRDVEESIVKLDSVYHYTVDDLQNIINHNLSEREKASEQAEEIIAEECAAFFEWLKVRQASNLIRTYRESADEIRQELLEKAQFSLSQGESADKILDEFSTKLMNKLLHSPTLVMQTMVKQGDSRGLQNFLSVIKK</sequence>
<comment type="function">
    <text evidence="1">Catalyzes the NADPH-dependent reduction of glutamyl-tRNA(Glu) to glutamate 1-semialdehyde (GSA).</text>
</comment>
<comment type="catalytic activity">
    <reaction evidence="1">
        <text>(S)-4-amino-5-oxopentanoate + tRNA(Glu) + NADP(+) = L-glutamyl-tRNA(Glu) + NADPH + H(+)</text>
        <dbReference type="Rhea" id="RHEA:12344"/>
        <dbReference type="Rhea" id="RHEA-COMP:9663"/>
        <dbReference type="Rhea" id="RHEA-COMP:9680"/>
        <dbReference type="ChEBI" id="CHEBI:15378"/>
        <dbReference type="ChEBI" id="CHEBI:57501"/>
        <dbReference type="ChEBI" id="CHEBI:57783"/>
        <dbReference type="ChEBI" id="CHEBI:58349"/>
        <dbReference type="ChEBI" id="CHEBI:78442"/>
        <dbReference type="ChEBI" id="CHEBI:78520"/>
        <dbReference type="EC" id="1.2.1.70"/>
    </reaction>
</comment>
<comment type="pathway">
    <text evidence="1">Porphyrin-containing compound metabolism; protoporphyrin-IX biosynthesis; 5-aminolevulinate from L-glutamyl-tRNA(Glu): step 1/2.</text>
</comment>
<comment type="subunit">
    <text evidence="1">Homodimer.</text>
</comment>
<comment type="domain">
    <text evidence="1">Possesses an unusual extended V-shaped dimeric structure with each monomer consisting of three distinct domains arranged along a curved 'spinal' alpha-helix. The N-terminal catalytic domain specifically recognizes the glutamate moiety of the substrate. The second domain is the NADPH-binding domain, and the third C-terminal domain is responsible for dimerization.</text>
</comment>
<comment type="miscellaneous">
    <text evidence="1">During catalysis, the active site Cys acts as a nucleophile attacking the alpha-carbonyl group of tRNA-bound glutamate with the formation of a thioester intermediate between enzyme and glutamate, and the concomitant release of tRNA(Glu). The thioester intermediate is finally reduced by direct hydride transfer from NADPH, to form the product GSA.</text>
</comment>
<comment type="similarity">
    <text evidence="1">Belongs to the glutamyl-tRNA reductase family.</text>
</comment>
<organism>
    <name type="scientific">Actinobacillus succinogenes (strain ATCC 55618 / DSM 22257 / CCUG 43843 / 130Z)</name>
    <dbReference type="NCBI Taxonomy" id="339671"/>
    <lineage>
        <taxon>Bacteria</taxon>
        <taxon>Pseudomonadati</taxon>
        <taxon>Pseudomonadota</taxon>
        <taxon>Gammaproteobacteria</taxon>
        <taxon>Pasteurellales</taxon>
        <taxon>Pasteurellaceae</taxon>
        <taxon>Actinobacillus</taxon>
    </lineage>
</organism>
<name>HEM1_ACTSZ</name>
<protein>
    <recommendedName>
        <fullName evidence="1">Glutamyl-tRNA reductase</fullName>
        <shortName evidence="1">GluTR</shortName>
        <ecNumber evidence="1">1.2.1.70</ecNumber>
    </recommendedName>
</protein>
<accession>A6VND5</accession>
<dbReference type="EC" id="1.2.1.70" evidence="1"/>
<dbReference type="EMBL" id="CP000746">
    <property type="protein sequence ID" value="ABR74482.1"/>
    <property type="molecule type" value="Genomic_DNA"/>
</dbReference>
<dbReference type="RefSeq" id="WP_012072859.1">
    <property type="nucleotide sequence ID" value="NC_009655.1"/>
</dbReference>
<dbReference type="SMR" id="A6VND5"/>
<dbReference type="STRING" id="339671.Asuc_1116"/>
<dbReference type="KEGG" id="asu:Asuc_1116"/>
<dbReference type="eggNOG" id="COG0373">
    <property type="taxonomic scope" value="Bacteria"/>
</dbReference>
<dbReference type="HOGENOM" id="CLU_035113_2_2_6"/>
<dbReference type="OrthoDB" id="110209at2"/>
<dbReference type="UniPathway" id="UPA00251">
    <property type="reaction ID" value="UER00316"/>
</dbReference>
<dbReference type="Proteomes" id="UP000001114">
    <property type="component" value="Chromosome"/>
</dbReference>
<dbReference type="GO" id="GO:0008883">
    <property type="term" value="F:glutamyl-tRNA reductase activity"/>
    <property type="evidence" value="ECO:0007669"/>
    <property type="project" value="UniProtKB-UniRule"/>
</dbReference>
<dbReference type="GO" id="GO:0050661">
    <property type="term" value="F:NADP binding"/>
    <property type="evidence" value="ECO:0007669"/>
    <property type="project" value="InterPro"/>
</dbReference>
<dbReference type="GO" id="GO:0019353">
    <property type="term" value="P:protoporphyrinogen IX biosynthetic process from glutamate"/>
    <property type="evidence" value="ECO:0007669"/>
    <property type="project" value="TreeGrafter"/>
</dbReference>
<dbReference type="CDD" id="cd05213">
    <property type="entry name" value="NAD_bind_Glutamyl_tRNA_reduct"/>
    <property type="match status" value="1"/>
</dbReference>
<dbReference type="FunFam" id="3.30.460.30:FF:000001">
    <property type="entry name" value="Glutamyl-tRNA reductase"/>
    <property type="match status" value="1"/>
</dbReference>
<dbReference type="FunFam" id="3.40.50.720:FF:000031">
    <property type="entry name" value="Glutamyl-tRNA reductase"/>
    <property type="match status" value="1"/>
</dbReference>
<dbReference type="Gene3D" id="3.30.460.30">
    <property type="entry name" value="Glutamyl-tRNA reductase, N-terminal domain"/>
    <property type="match status" value="1"/>
</dbReference>
<dbReference type="Gene3D" id="3.40.50.720">
    <property type="entry name" value="NAD(P)-binding Rossmann-like Domain"/>
    <property type="match status" value="1"/>
</dbReference>
<dbReference type="HAMAP" id="MF_00087">
    <property type="entry name" value="Glu_tRNA_reductase"/>
    <property type="match status" value="1"/>
</dbReference>
<dbReference type="InterPro" id="IPR000343">
    <property type="entry name" value="4pyrrol_synth_GluRdtase"/>
</dbReference>
<dbReference type="InterPro" id="IPR015896">
    <property type="entry name" value="4pyrrol_synth_GluRdtase_dimer"/>
</dbReference>
<dbReference type="InterPro" id="IPR015895">
    <property type="entry name" value="4pyrrol_synth_GluRdtase_N"/>
</dbReference>
<dbReference type="InterPro" id="IPR018214">
    <property type="entry name" value="GluRdtase_CS"/>
</dbReference>
<dbReference type="InterPro" id="IPR036453">
    <property type="entry name" value="GluRdtase_dimer_dom_sf"/>
</dbReference>
<dbReference type="InterPro" id="IPR036343">
    <property type="entry name" value="GluRdtase_N_sf"/>
</dbReference>
<dbReference type="InterPro" id="IPR036291">
    <property type="entry name" value="NAD(P)-bd_dom_sf"/>
</dbReference>
<dbReference type="InterPro" id="IPR006151">
    <property type="entry name" value="Shikm_DH/Glu-tRNA_Rdtase"/>
</dbReference>
<dbReference type="NCBIfam" id="TIGR01035">
    <property type="entry name" value="hemA"/>
    <property type="match status" value="1"/>
</dbReference>
<dbReference type="PANTHER" id="PTHR43013">
    <property type="entry name" value="GLUTAMYL-TRNA REDUCTASE"/>
    <property type="match status" value="1"/>
</dbReference>
<dbReference type="PANTHER" id="PTHR43013:SF1">
    <property type="entry name" value="GLUTAMYL-TRNA REDUCTASE"/>
    <property type="match status" value="1"/>
</dbReference>
<dbReference type="Pfam" id="PF00745">
    <property type="entry name" value="GlutR_dimer"/>
    <property type="match status" value="1"/>
</dbReference>
<dbReference type="Pfam" id="PF05201">
    <property type="entry name" value="GlutR_N"/>
    <property type="match status" value="1"/>
</dbReference>
<dbReference type="Pfam" id="PF01488">
    <property type="entry name" value="Shikimate_DH"/>
    <property type="match status" value="1"/>
</dbReference>
<dbReference type="PIRSF" id="PIRSF000445">
    <property type="entry name" value="4pyrrol_synth_GluRdtase"/>
    <property type="match status" value="1"/>
</dbReference>
<dbReference type="SUPFAM" id="SSF69742">
    <property type="entry name" value="Glutamyl tRNA-reductase catalytic, N-terminal domain"/>
    <property type="match status" value="1"/>
</dbReference>
<dbReference type="SUPFAM" id="SSF69075">
    <property type="entry name" value="Glutamyl tRNA-reductase dimerization domain"/>
    <property type="match status" value="1"/>
</dbReference>
<dbReference type="SUPFAM" id="SSF51735">
    <property type="entry name" value="NAD(P)-binding Rossmann-fold domains"/>
    <property type="match status" value="1"/>
</dbReference>
<dbReference type="PROSITE" id="PS00747">
    <property type="entry name" value="GLUTR"/>
    <property type="match status" value="1"/>
</dbReference>
<feature type="chain" id="PRO_1000071245" description="Glutamyl-tRNA reductase">
    <location>
        <begin position="1"/>
        <end position="435"/>
    </location>
</feature>
<feature type="active site" description="Nucleophile" evidence="1">
    <location>
        <position position="50"/>
    </location>
</feature>
<feature type="binding site" evidence="1">
    <location>
        <begin position="49"/>
        <end position="52"/>
    </location>
    <ligand>
        <name>substrate</name>
    </ligand>
</feature>
<feature type="binding site" evidence="1">
    <location>
        <position position="114"/>
    </location>
    <ligand>
        <name>substrate</name>
    </ligand>
</feature>
<feature type="binding site" evidence="1">
    <location>
        <begin position="119"/>
        <end position="121"/>
    </location>
    <ligand>
        <name>substrate</name>
    </ligand>
</feature>
<feature type="binding site" evidence="1">
    <location>
        <position position="125"/>
    </location>
    <ligand>
        <name>substrate</name>
    </ligand>
</feature>
<feature type="binding site" evidence="1">
    <location>
        <begin position="204"/>
        <end position="209"/>
    </location>
    <ligand>
        <name>NADP(+)</name>
        <dbReference type="ChEBI" id="CHEBI:58349"/>
    </ligand>
</feature>
<feature type="site" description="Important for activity" evidence="1">
    <location>
        <position position="104"/>
    </location>
</feature>